<accession>Q2RF97</accession>
<gene>
    <name evidence="1" type="primary">PB1</name>
</gene>
<dbReference type="EMBL" id="CY006841">
    <property type="protein sequence ID" value="ABC02275.1"/>
    <property type="molecule type" value="Genomic_RNA"/>
</dbReference>
<dbReference type="SMR" id="Q2RF97"/>
<dbReference type="Proteomes" id="UP000007792">
    <property type="component" value="Genome"/>
</dbReference>
<dbReference type="GO" id="GO:0044164">
    <property type="term" value="C:host cell cytosol"/>
    <property type="evidence" value="ECO:0007669"/>
    <property type="project" value="UniProtKB-SubCell"/>
</dbReference>
<dbReference type="GO" id="GO:0044192">
    <property type="term" value="C:host cell mitochondrial inner membrane"/>
    <property type="evidence" value="ECO:0007669"/>
    <property type="project" value="UniProtKB-SubCell"/>
</dbReference>
<dbReference type="GO" id="GO:0042025">
    <property type="term" value="C:host cell nucleus"/>
    <property type="evidence" value="ECO:0007669"/>
    <property type="project" value="UniProtKB-SubCell"/>
</dbReference>
<dbReference type="GO" id="GO:0016020">
    <property type="term" value="C:membrane"/>
    <property type="evidence" value="ECO:0007669"/>
    <property type="project" value="UniProtKB-UniRule"/>
</dbReference>
<dbReference type="GO" id="GO:0052150">
    <property type="term" value="P:symbiont-mediated perturbation of host apoptosis"/>
    <property type="evidence" value="ECO:0007669"/>
    <property type="project" value="UniProtKB-KW"/>
</dbReference>
<dbReference type="GO" id="GO:0039545">
    <property type="term" value="P:symbiont-mediated suppression of host cytoplasmic pattern recognition receptor signaling pathway via inhibition of MAVS activity"/>
    <property type="evidence" value="ECO:0007669"/>
    <property type="project" value="UniProtKB-KW"/>
</dbReference>
<dbReference type="HAMAP" id="MF_04064">
    <property type="entry name" value="INFV_PB1F2"/>
    <property type="match status" value="1"/>
</dbReference>
<dbReference type="InterPro" id="IPR021045">
    <property type="entry name" value="Flu_proapoptotic_PB1-F2"/>
</dbReference>
<dbReference type="Pfam" id="PF11986">
    <property type="entry name" value="PB1-F2"/>
    <property type="match status" value="1"/>
</dbReference>
<keyword id="KW-0053">Apoptosis</keyword>
<keyword id="KW-1035">Host cytoplasm</keyword>
<keyword id="KW-1043">Host membrane</keyword>
<keyword id="KW-1045">Host mitochondrion</keyword>
<keyword id="KW-1046">Host mitochondrion inner membrane</keyword>
<keyword id="KW-1048">Host nucleus</keyword>
<keyword id="KW-0945">Host-virus interaction</keyword>
<keyword id="KW-1090">Inhibition of host innate immune response by virus</keyword>
<keyword id="KW-1097">Inhibition of host MAVS by virus</keyword>
<keyword id="KW-1113">Inhibition of host RLR pathway by virus</keyword>
<keyword id="KW-0472">Membrane</keyword>
<keyword id="KW-1119">Modulation of host cell apoptosis by virus</keyword>
<keyword id="KW-0899">Viral immunoevasion</keyword>
<organism>
    <name type="scientific">Influenza A virus (strain A/Memphis/110/1976 H3N2)</name>
    <dbReference type="NCBI Taxonomy" id="383581"/>
    <lineage>
        <taxon>Viruses</taxon>
        <taxon>Riboviria</taxon>
        <taxon>Orthornavirae</taxon>
        <taxon>Negarnaviricota</taxon>
        <taxon>Polyploviricotina</taxon>
        <taxon>Insthoviricetes</taxon>
        <taxon>Articulavirales</taxon>
        <taxon>Orthomyxoviridae</taxon>
        <taxon>Alphainfluenzavirus</taxon>
        <taxon>Alphainfluenzavirus influenzae</taxon>
        <taxon>Influenza A virus</taxon>
    </lineage>
</organism>
<comment type="function">
    <text evidence="1">Plays an important role in promoting lung pathology in both primary viral infection and secondary bacterial infection. Promotes alteration of mitochondrial morphology, dissipation of mitochondrial membrane potential, and cell death. Alternatively, inhibits the production of interferon in the infected cell at the level of host mitochondrial antiviral signaling MAVS. Its level of expression differs greatly depending on which cell type is infected, in a manner that is independent of the levels of expression of other viral proteins. Monocytic cells are more affected than epithelial cells. Seems to disable virus-infected monocytes or other host innate immune cells. During early stage of infection, predisposes the mitochondria to permeability transition through interaction with host SLC25A6/ANT3 and VDAC1. These proteins participate in the formation of the permeability transition pore complex (PTPC) responsible of the release of mitochondrial products that triggers apoptosis.</text>
</comment>
<comment type="subunit">
    <text evidence="1">Oligomer. Interacts with human SLC25A6/ANT3 and VDAC1. Interacts with host MAVS.</text>
</comment>
<comment type="subcellular location">
    <subcellularLocation>
        <location evidence="1">Host mitochondrion inner membrane</location>
    </subcellularLocation>
    <subcellularLocation>
        <location evidence="1">Host nucleus</location>
    </subcellularLocation>
    <subcellularLocation>
        <location evidence="1">Host cytoplasm</location>
        <location evidence="1">Host cytosol</location>
    </subcellularLocation>
    <text evidence="1">Inner mitochondrial membrane in most cells types. Otherwise is detected in the nucleus and cytosol.</text>
</comment>
<comment type="miscellaneous">
    <text>Is not encoded in all strains, and seems to be dispensable for replication.</text>
</comment>
<comment type="similarity">
    <text evidence="1">Belongs to the influenza viruses PB1-F2 family.</text>
</comment>
<reference key="1">
    <citation type="submission" date="2005-12" db="EMBL/GenBank/DDBJ databases">
        <title>The NIAID influenza genome sequencing project.</title>
        <authorList>
            <person name="Ghedin E."/>
            <person name="Spiro D."/>
            <person name="Miller N."/>
            <person name="Zaborsky J."/>
            <person name="Feldblyum T."/>
            <person name="Subbu V."/>
            <person name="Shumway M."/>
            <person name="Sparenborg J."/>
            <person name="Groveman L."/>
            <person name="Halpin R."/>
            <person name="Sitz J."/>
            <person name="Koo H."/>
            <person name="Salzberg S.L."/>
            <person name="Webster R.G."/>
            <person name="Hoffmann E."/>
            <person name="Krauss S."/>
            <person name="Naeve C."/>
            <person name="Bao Y."/>
            <person name="Bolotov P."/>
            <person name="Dernovoy D."/>
            <person name="Kiryutin B."/>
            <person name="Lipman D.J."/>
            <person name="Tatusova T."/>
        </authorList>
    </citation>
    <scope>NUCLEOTIDE SEQUENCE [GENOMIC RNA]</scope>
</reference>
<feature type="chain" id="PRO_0000278718" description="Protein PB1-F2">
    <location>
        <begin position="1"/>
        <end position="90"/>
    </location>
</feature>
<feature type="region of interest" description="Disordered" evidence="2">
    <location>
        <begin position="1"/>
        <end position="31"/>
    </location>
</feature>
<feature type="region of interest" description="Mitochondrial targeting sequence" evidence="1">
    <location>
        <begin position="65"/>
        <end position="87"/>
    </location>
</feature>
<feature type="site" description="Low pathogenicity" evidence="1">
    <location>
        <position position="66"/>
    </location>
</feature>
<protein>
    <recommendedName>
        <fullName evidence="1">Protein PB1-F2</fullName>
    </recommendedName>
</protein>
<evidence type="ECO:0000255" key="1">
    <source>
        <dbReference type="HAMAP-Rule" id="MF_04064"/>
    </source>
</evidence>
<evidence type="ECO:0000256" key="2">
    <source>
        <dbReference type="SAM" id="MobiDB-lite"/>
    </source>
</evidence>
<organismHost>
    <name type="scientific">Aves</name>
    <dbReference type="NCBI Taxonomy" id="8782"/>
</organismHost>
<organismHost>
    <name type="scientific">Cetacea</name>
    <name type="common">whales</name>
    <dbReference type="NCBI Taxonomy" id="9721"/>
</organismHost>
<organismHost>
    <name type="scientific">Homo sapiens</name>
    <name type="common">Human</name>
    <dbReference type="NCBI Taxonomy" id="9606"/>
</organismHost>
<organismHost>
    <name type="scientific">Phocidae</name>
    <name type="common">true seals</name>
    <dbReference type="NCBI Taxonomy" id="9709"/>
</organismHost>
<organismHost>
    <name type="scientific">Sus scrofa</name>
    <name type="common">Pig</name>
    <dbReference type="NCBI Taxonomy" id="9823"/>
</organismHost>
<proteinExistence type="inferred from homology"/>
<name>PB1F2_I76A6</name>
<sequence>MEQEQDTPWTQSTEHINIQKKGSGQQTQRLGRPNLTQLMDHYLRIMSQADMHKQTVSWKQWLSLKNPTQGFLKTRALKRWKSFNKQGWTN</sequence>